<comment type="function">
    <text evidence="1">Associates with the EF-Tu.GDP complex and induces the exchange of GDP to GTP. It remains bound to the aminoacyl-tRNA.EF-Tu.GTP complex up to the GTP hydrolysis stage on the ribosome.</text>
</comment>
<comment type="subcellular location">
    <subcellularLocation>
        <location evidence="1">Cytoplasm</location>
    </subcellularLocation>
</comment>
<comment type="similarity">
    <text evidence="1">Belongs to the EF-Ts family.</text>
</comment>
<reference key="1">
    <citation type="journal article" date="2005" name="Proc. Natl. Acad. Sci. U.S.A.">
        <title>Complete genome sequence of the probiotic lactic acid bacterium Lactobacillus acidophilus NCFM.</title>
        <authorList>
            <person name="Altermann E."/>
            <person name="Russell W.M."/>
            <person name="Azcarate-Peril M.A."/>
            <person name="Barrangou R."/>
            <person name="Buck B.L."/>
            <person name="McAuliffe O."/>
            <person name="Souther N."/>
            <person name="Dobson A."/>
            <person name="Duong T."/>
            <person name="Callanan M."/>
            <person name="Lick S."/>
            <person name="Hamrick A."/>
            <person name="Cano R."/>
            <person name="Klaenhammer T.R."/>
        </authorList>
    </citation>
    <scope>NUCLEOTIDE SEQUENCE [LARGE SCALE GENOMIC DNA]</scope>
    <source>
        <strain>ATCC 700396 / NCK56 / N2 / NCFM</strain>
    </source>
</reference>
<feature type="chain" id="PRO_0000241489" description="Elongation factor Ts">
    <location>
        <begin position="1"/>
        <end position="341"/>
    </location>
</feature>
<feature type="region of interest" description="Involved in Mg(2+) ion dislocation from EF-Tu" evidence="1">
    <location>
        <begin position="80"/>
        <end position="83"/>
    </location>
</feature>
<accession>Q5FJM4</accession>
<protein>
    <recommendedName>
        <fullName evidence="1">Elongation factor Ts</fullName>
        <shortName evidence="1">EF-Ts</shortName>
    </recommendedName>
</protein>
<evidence type="ECO:0000255" key="1">
    <source>
        <dbReference type="HAMAP-Rule" id="MF_00050"/>
    </source>
</evidence>
<keyword id="KW-0963">Cytoplasm</keyword>
<keyword id="KW-0251">Elongation factor</keyword>
<keyword id="KW-0648">Protein biosynthesis</keyword>
<keyword id="KW-1185">Reference proteome</keyword>
<sequence>MAQITAKMVKELRERTGAGVMDAKKALVEVDGDMDKAVEFLREKGMAKAAKKADRVAAEGLTGVYVADNVAAVTEINSETDFVSQNDKFVKLVKDVTKTIAEGKPANIEEADELKMDDGSTLDQAFVNATATIGEKIVLRRFALEEKTDDQEFGAYQHNGGQIGVITVLEGADAATAKHLAMHIAAMNPKVISPDELDDEFITEQLALMNHKIDQDNESRELVHKKPLPHLVYGSEKQLTDDVLAKAKEDIKAELKEEGKPEKIWDRIIPGKMQRFIDDNTQVDKQFAVLSQDYIMDDSKTVGEFLKEKGAKLVAFQRFEVGEGIEKKQEDFAAEVREQMK</sequence>
<organism>
    <name type="scientific">Lactobacillus acidophilus (strain ATCC 700396 / NCK56 / N2 / NCFM)</name>
    <dbReference type="NCBI Taxonomy" id="272621"/>
    <lineage>
        <taxon>Bacteria</taxon>
        <taxon>Bacillati</taxon>
        <taxon>Bacillota</taxon>
        <taxon>Bacilli</taxon>
        <taxon>Lactobacillales</taxon>
        <taxon>Lactobacillaceae</taxon>
        <taxon>Lactobacillus</taxon>
    </lineage>
</organism>
<proteinExistence type="inferred from homology"/>
<dbReference type="EMBL" id="CP000033">
    <property type="protein sequence ID" value="AAV43100.1"/>
    <property type="molecule type" value="Genomic_DNA"/>
</dbReference>
<dbReference type="RefSeq" id="WP_003547835.1">
    <property type="nucleotide sequence ID" value="NC_006814.3"/>
</dbReference>
<dbReference type="RefSeq" id="YP_194131.1">
    <property type="nucleotide sequence ID" value="NC_006814.3"/>
</dbReference>
<dbReference type="SMR" id="Q5FJM4"/>
<dbReference type="STRING" id="272621.LBA1269"/>
<dbReference type="GeneID" id="93289643"/>
<dbReference type="KEGG" id="lac:LBA1269"/>
<dbReference type="PATRIC" id="fig|272621.13.peg.1202"/>
<dbReference type="eggNOG" id="COG0264">
    <property type="taxonomic scope" value="Bacteria"/>
</dbReference>
<dbReference type="HOGENOM" id="CLU_047155_0_1_9"/>
<dbReference type="OrthoDB" id="9808348at2"/>
<dbReference type="BioCyc" id="LACI272621:G1G49-1250-MONOMER"/>
<dbReference type="Proteomes" id="UP000006381">
    <property type="component" value="Chromosome"/>
</dbReference>
<dbReference type="GO" id="GO:0005737">
    <property type="term" value="C:cytoplasm"/>
    <property type="evidence" value="ECO:0007669"/>
    <property type="project" value="UniProtKB-SubCell"/>
</dbReference>
<dbReference type="GO" id="GO:0003746">
    <property type="term" value="F:translation elongation factor activity"/>
    <property type="evidence" value="ECO:0007669"/>
    <property type="project" value="UniProtKB-UniRule"/>
</dbReference>
<dbReference type="CDD" id="cd14275">
    <property type="entry name" value="UBA_EF-Ts"/>
    <property type="match status" value="1"/>
</dbReference>
<dbReference type="FunFam" id="1.10.286.20:FF:000004">
    <property type="entry name" value="Elongation factor Ts"/>
    <property type="match status" value="1"/>
</dbReference>
<dbReference type="FunFam" id="1.10.8.10:FF:000001">
    <property type="entry name" value="Elongation factor Ts"/>
    <property type="match status" value="1"/>
</dbReference>
<dbReference type="Gene3D" id="1.10.286.20">
    <property type="match status" value="1"/>
</dbReference>
<dbReference type="Gene3D" id="1.10.8.10">
    <property type="entry name" value="DNA helicase RuvA subunit, C-terminal domain"/>
    <property type="match status" value="1"/>
</dbReference>
<dbReference type="Gene3D" id="3.30.479.20">
    <property type="entry name" value="Elongation factor Ts, dimerisation domain"/>
    <property type="match status" value="2"/>
</dbReference>
<dbReference type="HAMAP" id="MF_00050">
    <property type="entry name" value="EF_Ts"/>
    <property type="match status" value="1"/>
</dbReference>
<dbReference type="InterPro" id="IPR036402">
    <property type="entry name" value="EF-Ts_dimer_sf"/>
</dbReference>
<dbReference type="InterPro" id="IPR001816">
    <property type="entry name" value="Transl_elong_EFTs/EF1B"/>
</dbReference>
<dbReference type="InterPro" id="IPR014039">
    <property type="entry name" value="Transl_elong_EFTs/EF1B_dimer"/>
</dbReference>
<dbReference type="InterPro" id="IPR018101">
    <property type="entry name" value="Transl_elong_Ts_CS"/>
</dbReference>
<dbReference type="InterPro" id="IPR009060">
    <property type="entry name" value="UBA-like_sf"/>
</dbReference>
<dbReference type="NCBIfam" id="TIGR00116">
    <property type="entry name" value="tsf"/>
    <property type="match status" value="1"/>
</dbReference>
<dbReference type="PANTHER" id="PTHR11741">
    <property type="entry name" value="ELONGATION FACTOR TS"/>
    <property type="match status" value="1"/>
</dbReference>
<dbReference type="PANTHER" id="PTHR11741:SF0">
    <property type="entry name" value="ELONGATION FACTOR TS, MITOCHONDRIAL"/>
    <property type="match status" value="1"/>
</dbReference>
<dbReference type="Pfam" id="PF00889">
    <property type="entry name" value="EF_TS"/>
    <property type="match status" value="2"/>
</dbReference>
<dbReference type="SUPFAM" id="SSF54713">
    <property type="entry name" value="Elongation factor Ts (EF-Ts), dimerisation domain"/>
    <property type="match status" value="2"/>
</dbReference>
<dbReference type="SUPFAM" id="SSF46934">
    <property type="entry name" value="UBA-like"/>
    <property type="match status" value="1"/>
</dbReference>
<dbReference type="PROSITE" id="PS01126">
    <property type="entry name" value="EF_TS_1"/>
    <property type="match status" value="1"/>
</dbReference>
<dbReference type="PROSITE" id="PS01127">
    <property type="entry name" value="EF_TS_2"/>
    <property type="match status" value="1"/>
</dbReference>
<gene>
    <name evidence="1" type="primary">tsf</name>
    <name type="ordered locus">LBA1269</name>
</gene>
<name>EFTS_LACAC</name>